<organism>
    <name type="scientific">Pyropia yezoensis</name>
    <name type="common">Susabi-nori</name>
    <name type="synonym">Porphyra yezoensis</name>
    <dbReference type="NCBI Taxonomy" id="2788"/>
    <lineage>
        <taxon>Eukaryota</taxon>
        <taxon>Rhodophyta</taxon>
        <taxon>Bangiophyceae</taxon>
        <taxon>Bangiales</taxon>
        <taxon>Bangiaceae</taxon>
        <taxon>Pyropia</taxon>
    </lineage>
</organism>
<name>EFTS_PYRYE</name>
<evidence type="ECO:0000255" key="1">
    <source>
        <dbReference type="HAMAP-Rule" id="MF_03135"/>
    </source>
</evidence>
<accession>Q1XDN9</accession>
<feature type="chain" id="PRO_0000275352" description="Elongation factor Ts, chloroplastic">
    <location>
        <begin position="1"/>
        <end position="220"/>
    </location>
</feature>
<sequence length="220" mass="24607">MTLQISAQVVKALRDKTGAGMMDCKKALQANNGNEEKALESLRQKGLASANKKSNRTAIEGLLESYIHTGGRIGVLVEVNCETDFVARRPEFQKLAKDIAMQIAASPNVEYVSTQDIPSEIINLEQRVEAGKDDLKNKPVDRIETIIEGRMKKRLKELSLLDQMFIRNQDISIEDLINQNIAVLGENIKIRRFVRFLLGGGEENLKVNFADEVADILNKK</sequence>
<reference key="1">
    <citation type="submission" date="2003-11" db="EMBL/GenBank/DDBJ databases">
        <title>Whole genome sequence of Porphyra yezoensis chloroplast.</title>
        <authorList>
            <person name="Kunimoto M."/>
            <person name="Morishima K."/>
            <person name="Yoshikawa M."/>
            <person name="Fukuda S."/>
            <person name="Kobayashi T."/>
            <person name="Kobayashi M."/>
            <person name="Okazaki T."/>
            <person name="Ohara I."/>
            <person name="Nakayama I."/>
        </authorList>
    </citation>
    <scope>NUCLEOTIDE SEQUENCE [LARGE SCALE GENOMIC DNA]</scope>
    <source>
        <strain>U-51</strain>
    </source>
</reference>
<dbReference type="EMBL" id="AP006715">
    <property type="protein sequence ID" value="BAE92372.1"/>
    <property type="molecule type" value="Genomic_DNA"/>
</dbReference>
<dbReference type="RefSeq" id="YP_536929.1">
    <property type="nucleotide sequence ID" value="NC_007932.1"/>
</dbReference>
<dbReference type="SMR" id="Q1XDN9"/>
<dbReference type="GeneID" id="3978989"/>
<dbReference type="GO" id="GO:0009507">
    <property type="term" value="C:chloroplast"/>
    <property type="evidence" value="ECO:0007669"/>
    <property type="project" value="UniProtKB-SubCell"/>
</dbReference>
<dbReference type="GO" id="GO:0005739">
    <property type="term" value="C:mitochondrion"/>
    <property type="evidence" value="ECO:0007669"/>
    <property type="project" value="UniProtKB-UniRule"/>
</dbReference>
<dbReference type="GO" id="GO:0003746">
    <property type="term" value="F:translation elongation factor activity"/>
    <property type="evidence" value="ECO:0007669"/>
    <property type="project" value="UniProtKB-UniRule"/>
</dbReference>
<dbReference type="CDD" id="cd14275">
    <property type="entry name" value="UBA_EF-Ts"/>
    <property type="match status" value="1"/>
</dbReference>
<dbReference type="FunFam" id="1.10.8.10:FF:000001">
    <property type="entry name" value="Elongation factor Ts"/>
    <property type="match status" value="1"/>
</dbReference>
<dbReference type="Gene3D" id="1.10.286.20">
    <property type="match status" value="1"/>
</dbReference>
<dbReference type="Gene3D" id="1.10.8.10">
    <property type="entry name" value="DNA helicase RuvA subunit, C-terminal domain"/>
    <property type="match status" value="1"/>
</dbReference>
<dbReference type="Gene3D" id="3.30.479.20">
    <property type="entry name" value="Elongation factor Ts, dimerisation domain"/>
    <property type="match status" value="1"/>
</dbReference>
<dbReference type="HAMAP" id="MF_00050">
    <property type="entry name" value="EF_Ts"/>
    <property type="match status" value="1"/>
</dbReference>
<dbReference type="InterPro" id="IPR036402">
    <property type="entry name" value="EF-Ts_dimer_sf"/>
</dbReference>
<dbReference type="InterPro" id="IPR001816">
    <property type="entry name" value="Transl_elong_EFTs/EF1B"/>
</dbReference>
<dbReference type="InterPro" id="IPR014039">
    <property type="entry name" value="Transl_elong_EFTs/EF1B_dimer"/>
</dbReference>
<dbReference type="InterPro" id="IPR018101">
    <property type="entry name" value="Transl_elong_Ts_CS"/>
</dbReference>
<dbReference type="InterPro" id="IPR009060">
    <property type="entry name" value="UBA-like_sf"/>
</dbReference>
<dbReference type="NCBIfam" id="TIGR00116">
    <property type="entry name" value="tsf"/>
    <property type="match status" value="1"/>
</dbReference>
<dbReference type="PANTHER" id="PTHR11741">
    <property type="entry name" value="ELONGATION FACTOR TS"/>
    <property type="match status" value="1"/>
</dbReference>
<dbReference type="PANTHER" id="PTHR11741:SF0">
    <property type="entry name" value="ELONGATION FACTOR TS, MITOCHONDRIAL"/>
    <property type="match status" value="1"/>
</dbReference>
<dbReference type="Pfam" id="PF00889">
    <property type="entry name" value="EF_TS"/>
    <property type="match status" value="1"/>
</dbReference>
<dbReference type="SUPFAM" id="SSF54713">
    <property type="entry name" value="Elongation factor Ts (EF-Ts), dimerisation domain"/>
    <property type="match status" value="1"/>
</dbReference>
<dbReference type="SUPFAM" id="SSF46934">
    <property type="entry name" value="UBA-like"/>
    <property type="match status" value="1"/>
</dbReference>
<dbReference type="PROSITE" id="PS01126">
    <property type="entry name" value="EF_TS_1"/>
    <property type="match status" value="1"/>
</dbReference>
<dbReference type="PROSITE" id="PS01127">
    <property type="entry name" value="EF_TS_2"/>
    <property type="match status" value="1"/>
</dbReference>
<protein>
    <recommendedName>
        <fullName>Elongation factor Ts, chloroplastic</fullName>
        <shortName evidence="1">EF-Ts</shortName>
    </recommendedName>
</protein>
<comment type="function">
    <text evidence="1">Associates with the EF-Tu.GDP complex and induces the exchange of GDP to GTP. It remains bound to the aminoacyl-tRNA.EF-Tu.GTP complex up to the GTP hydrolysis stage on the ribosome.</text>
</comment>
<comment type="subcellular location">
    <subcellularLocation>
        <location>Plastid</location>
        <location>Chloroplast</location>
    </subcellularLocation>
</comment>
<comment type="similarity">
    <text evidence="1">Belongs to the EF-Ts family.</text>
</comment>
<proteinExistence type="inferred from homology"/>
<gene>
    <name type="primary">tsf</name>
</gene>
<keyword id="KW-0150">Chloroplast</keyword>
<keyword id="KW-0251">Elongation factor</keyword>
<keyword id="KW-0934">Plastid</keyword>
<keyword id="KW-0648">Protein biosynthesis</keyword>
<geneLocation type="chloroplast"/>